<comment type="function">
    <text>Plays an important role in the control of mitosis by reversing the action of the nimA kinase.</text>
</comment>
<comment type="catalytic activity">
    <reaction>
        <text>O-phospho-L-seryl-[protein] + H2O = L-seryl-[protein] + phosphate</text>
        <dbReference type="Rhea" id="RHEA:20629"/>
        <dbReference type="Rhea" id="RHEA-COMP:9863"/>
        <dbReference type="Rhea" id="RHEA-COMP:11604"/>
        <dbReference type="ChEBI" id="CHEBI:15377"/>
        <dbReference type="ChEBI" id="CHEBI:29999"/>
        <dbReference type="ChEBI" id="CHEBI:43474"/>
        <dbReference type="ChEBI" id="CHEBI:83421"/>
        <dbReference type="EC" id="3.1.3.16"/>
    </reaction>
</comment>
<comment type="catalytic activity">
    <reaction>
        <text>O-phospho-L-threonyl-[protein] + H2O = L-threonyl-[protein] + phosphate</text>
        <dbReference type="Rhea" id="RHEA:47004"/>
        <dbReference type="Rhea" id="RHEA-COMP:11060"/>
        <dbReference type="Rhea" id="RHEA-COMP:11605"/>
        <dbReference type="ChEBI" id="CHEBI:15377"/>
        <dbReference type="ChEBI" id="CHEBI:30013"/>
        <dbReference type="ChEBI" id="CHEBI:43474"/>
        <dbReference type="ChEBI" id="CHEBI:61977"/>
        <dbReference type="EC" id="3.1.3.16"/>
    </reaction>
</comment>
<comment type="cofactor">
    <cofactor evidence="1">
        <name>Mn(2+)</name>
        <dbReference type="ChEBI" id="CHEBI:29035"/>
    </cofactor>
    <text evidence="1">Binds 2 manganese ions per subunit.</text>
</comment>
<comment type="similarity">
    <text evidence="2">Belongs to the PPP phosphatase family. PP-1 subfamily.</text>
</comment>
<reference key="1">
    <citation type="journal article" date="1989" name="Cell">
        <title>The bimG gene of Aspergillus nidulans, required for completion of anaphase, encodes a homolog of mammalian phosphoprotein phosphatase 1.</title>
        <authorList>
            <person name="Doonan J.H."/>
            <person name="Morris N.R."/>
        </authorList>
    </citation>
    <scope>NUCLEOTIDE SEQUENCE [MRNA]</scope>
</reference>
<reference key="2">
    <citation type="journal article" date="2005" name="Nature">
        <title>Sequencing of Aspergillus nidulans and comparative analysis with A. fumigatus and A. oryzae.</title>
        <authorList>
            <person name="Galagan J.E."/>
            <person name="Calvo S.E."/>
            <person name="Cuomo C."/>
            <person name="Ma L.-J."/>
            <person name="Wortman J.R."/>
            <person name="Batzoglou S."/>
            <person name="Lee S.-I."/>
            <person name="Bastuerkmen M."/>
            <person name="Spevak C.C."/>
            <person name="Clutterbuck J."/>
            <person name="Kapitonov V."/>
            <person name="Jurka J."/>
            <person name="Scazzocchio C."/>
            <person name="Farman M.L."/>
            <person name="Butler J."/>
            <person name="Purcell S."/>
            <person name="Harris S."/>
            <person name="Braus G.H."/>
            <person name="Draht O."/>
            <person name="Busch S."/>
            <person name="D'Enfert C."/>
            <person name="Bouchier C."/>
            <person name="Goldman G.H."/>
            <person name="Bell-Pedersen D."/>
            <person name="Griffiths-Jones S."/>
            <person name="Doonan J.H."/>
            <person name="Yu J."/>
            <person name="Vienken K."/>
            <person name="Pain A."/>
            <person name="Freitag M."/>
            <person name="Selker E.U."/>
            <person name="Archer D.B."/>
            <person name="Penalva M.A."/>
            <person name="Oakley B.R."/>
            <person name="Momany M."/>
            <person name="Tanaka T."/>
            <person name="Kumagai T."/>
            <person name="Asai K."/>
            <person name="Machida M."/>
            <person name="Nierman W.C."/>
            <person name="Denning D.W."/>
            <person name="Caddick M.X."/>
            <person name="Hynes M."/>
            <person name="Paoletti M."/>
            <person name="Fischer R."/>
            <person name="Miller B.L."/>
            <person name="Dyer P.S."/>
            <person name="Sachs M.S."/>
            <person name="Osmani S.A."/>
            <person name="Birren B.W."/>
        </authorList>
    </citation>
    <scope>NUCLEOTIDE SEQUENCE [LARGE SCALE GENOMIC DNA]</scope>
    <source>
        <strain>FGSC A4 / ATCC 38163 / CBS 112.46 / NRRL 194 / M139</strain>
    </source>
</reference>
<reference key="3">
    <citation type="journal article" date="2009" name="Fungal Genet. Biol.">
        <title>The 2008 update of the Aspergillus nidulans genome annotation: a community effort.</title>
        <authorList>
            <person name="Wortman J.R."/>
            <person name="Gilsenan J.M."/>
            <person name="Joardar V."/>
            <person name="Deegan J."/>
            <person name="Clutterbuck J."/>
            <person name="Andersen M.R."/>
            <person name="Archer D."/>
            <person name="Bencina M."/>
            <person name="Braus G."/>
            <person name="Coutinho P."/>
            <person name="von Dohren H."/>
            <person name="Doonan J."/>
            <person name="Driessen A.J."/>
            <person name="Durek P."/>
            <person name="Espeso E."/>
            <person name="Fekete E."/>
            <person name="Flipphi M."/>
            <person name="Estrada C.G."/>
            <person name="Geysens S."/>
            <person name="Goldman G."/>
            <person name="de Groot P.W."/>
            <person name="Hansen K."/>
            <person name="Harris S.D."/>
            <person name="Heinekamp T."/>
            <person name="Helmstaedt K."/>
            <person name="Henrissat B."/>
            <person name="Hofmann G."/>
            <person name="Homan T."/>
            <person name="Horio T."/>
            <person name="Horiuchi H."/>
            <person name="James S."/>
            <person name="Jones M."/>
            <person name="Karaffa L."/>
            <person name="Karanyi Z."/>
            <person name="Kato M."/>
            <person name="Keller N."/>
            <person name="Kelly D.E."/>
            <person name="Kiel J.A."/>
            <person name="Kim J.M."/>
            <person name="van der Klei I.J."/>
            <person name="Klis F.M."/>
            <person name="Kovalchuk A."/>
            <person name="Krasevec N."/>
            <person name="Kubicek C.P."/>
            <person name="Liu B."/>
            <person name="Maccabe A."/>
            <person name="Meyer V."/>
            <person name="Mirabito P."/>
            <person name="Miskei M."/>
            <person name="Mos M."/>
            <person name="Mullins J."/>
            <person name="Nelson D.R."/>
            <person name="Nielsen J."/>
            <person name="Oakley B.R."/>
            <person name="Osmani S.A."/>
            <person name="Pakula T."/>
            <person name="Paszewski A."/>
            <person name="Paulsen I."/>
            <person name="Pilsyk S."/>
            <person name="Pocsi I."/>
            <person name="Punt P.J."/>
            <person name="Ram A.F."/>
            <person name="Ren Q."/>
            <person name="Robellet X."/>
            <person name="Robson G."/>
            <person name="Seiboth B."/>
            <person name="van Solingen P."/>
            <person name="Specht T."/>
            <person name="Sun J."/>
            <person name="Taheri-Talesh N."/>
            <person name="Takeshita N."/>
            <person name="Ussery D."/>
            <person name="vanKuyk P.A."/>
            <person name="Visser H."/>
            <person name="van de Vondervoort P.J."/>
            <person name="de Vries R.P."/>
            <person name="Walton J."/>
            <person name="Xiang X."/>
            <person name="Xiong Y."/>
            <person name="Zeng A.P."/>
            <person name="Brandt B.W."/>
            <person name="Cornell M.J."/>
            <person name="van den Hondel C.A."/>
            <person name="Visser J."/>
            <person name="Oliver S.G."/>
            <person name="Turner G."/>
        </authorList>
    </citation>
    <scope>GENOME REANNOTATION</scope>
    <source>
        <strain>FGSC A4 / ATCC 38163 / CBS 112.46 / NRRL 194 / M139</strain>
    </source>
</reference>
<name>PP1_EMENI</name>
<feature type="chain" id="PRO_0000058816" description="Serine/threonine-protein phosphatase PP1">
    <location>
        <begin position="1"/>
        <end position="323"/>
    </location>
</feature>
<feature type="active site" description="Proton donor" evidence="1">
    <location>
        <position position="124"/>
    </location>
</feature>
<feature type="binding site" evidence="1">
    <location>
        <position position="63"/>
    </location>
    <ligand>
        <name>Mn(2+)</name>
        <dbReference type="ChEBI" id="CHEBI:29035"/>
        <label>1</label>
    </ligand>
</feature>
<feature type="binding site" evidence="1">
    <location>
        <position position="65"/>
    </location>
    <ligand>
        <name>Mn(2+)</name>
        <dbReference type="ChEBI" id="CHEBI:29035"/>
        <label>1</label>
    </ligand>
</feature>
<feature type="binding site" evidence="1">
    <location>
        <position position="91"/>
    </location>
    <ligand>
        <name>Mn(2+)</name>
        <dbReference type="ChEBI" id="CHEBI:29035"/>
        <label>1</label>
    </ligand>
</feature>
<feature type="binding site" evidence="1">
    <location>
        <position position="91"/>
    </location>
    <ligand>
        <name>Mn(2+)</name>
        <dbReference type="ChEBI" id="CHEBI:29035"/>
        <label>2</label>
    </ligand>
</feature>
<feature type="binding site" evidence="1">
    <location>
        <position position="123"/>
    </location>
    <ligand>
        <name>Mn(2+)</name>
        <dbReference type="ChEBI" id="CHEBI:29035"/>
        <label>2</label>
    </ligand>
</feature>
<feature type="binding site" evidence="1">
    <location>
        <position position="172"/>
    </location>
    <ligand>
        <name>Mn(2+)</name>
        <dbReference type="ChEBI" id="CHEBI:29035"/>
        <label>2</label>
    </ligand>
</feature>
<feature type="binding site" evidence="1">
    <location>
        <position position="247"/>
    </location>
    <ligand>
        <name>Mn(2+)</name>
        <dbReference type="ChEBI" id="CHEBI:29035"/>
        <label>2</label>
    </ligand>
</feature>
<proteinExistence type="evidence at transcript level"/>
<sequence length="323" mass="37176">MADQDVDLDSIIDRLLEVRGSRPGKQVQLLESEIRYLCTKAREIFISQPILLELEAPIKICGDIHGQYYDLLRLFEYGGFPPEANYLFLGDYVDRGKQSLETICLLLAYKIKYPENFFVLRGNHECASINRIYGFYDECKRRYNIKLWKTFTDCFNCLPIAAIIDEKIFTMHGGLSPDLNSMEQIRRVMRPTDIPDCGLLCDLLWSDPDKDITGWSENDRGVSFTFGPDVVSRFLQKHDMDLICRAHQVVEDGYEFFSKRQLVTLFSAPNYCGEFDNAGAMMSVDESLLCSFQILKPAEKKQKYVYGAMSSGRPITPPRKQKK</sequence>
<organism>
    <name type="scientific">Emericella nidulans (strain FGSC A4 / ATCC 38163 / CBS 112.46 / NRRL 194 / M139)</name>
    <name type="common">Aspergillus nidulans</name>
    <dbReference type="NCBI Taxonomy" id="227321"/>
    <lineage>
        <taxon>Eukaryota</taxon>
        <taxon>Fungi</taxon>
        <taxon>Dikarya</taxon>
        <taxon>Ascomycota</taxon>
        <taxon>Pezizomycotina</taxon>
        <taxon>Eurotiomycetes</taxon>
        <taxon>Eurotiomycetidae</taxon>
        <taxon>Eurotiales</taxon>
        <taxon>Aspergillaceae</taxon>
        <taxon>Aspergillus</taxon>
        <taxon>Aspergillus subgen. Nidulantes</taxon>
    </lineage>
</organism>
<evidence type="ECO:0000250" key="1"/>
<evidence type="ECO:0000305" key="2"/>
<keyword id="KW-0131">Cell cycle</keyword>
<keyword id="KW-0132">Cell division</keyword>
<keyword id="KW-0378">Hydrolase</keyword>
<keyword id="KW-0464">Manganese</keyword>
<keyword id="KW-0479">Metal-binding</keyword>
<keyword id="KW-0498">Mitosis</keyword>
<keyword id="KW-0904">Protein phosphatase</keyword>
<keyword id="KW-1185">Reference proteome</keyword>
<protein>
    <recommendedName>
        <fullName>Serine/threonine-protein phosphatase PP1</fullName>
        <ecNumber>3.1.3.16</ecNumber>
    </recommendedName>
</protein>
<gene>
    <name type="primary">bimG</name>
    <name type="ORF">AN0410</name>
</gene>
<accession>P20654</accession>
<accession>C8VTH6</accession>
<accession>Q5BGC0</accession>
<dbReference type="EC" id="3.1.3.16"/>
<dbReference type="EMBL" id="M27067">
    <property type="protein sequence ID" value="AAA33299.1"/>
    <property type="molecule type" value="mRNA"/>
</dbReference>
<dbReference type="EMBL" id="AACD01000007">
    <property type="protein sequence ID" value="EAA66509.1"/>
    <property type="molecule type" value="Genomic_DNA"/>
</dbReference>
<dbReference type="EMBL" id="BN001308">
    <property type="protein sequence ID" value="CBF89542.1"/>
    <property type="molecule type" value="Genomic_DNA"/>
</dbReference>
<dbReference type="PIR" id="A32549">
    <property type="entry name" value="A32549"/>
</dbReference>
<dbReference type="RefSeq" id="XP_658014.1">
    <property type="nucleotide sequence ID" value="XM_652922.1"/>
</dbReference>
<dbReference type="SMR" id="P20654"/>
<dbReference type="FunCoup" id="P20654">
    <property type="interactions" value="963"/>
</dbReference>
<dbReference type="STRING" id="227321.P20654"/>
<dbReference type="EnsemblFungi" id="CBF89542">
    <property type="protein sequence ID" value="CBF89542"/>
    <property type="gene ID" value="ANIA_00410"/>
</dbReference>
<dbReference type="KEGG" id="ani:ANIA_00410"/>
<dbReference type="VEuPathDB" id="FungiDB:AN0410"/>
<dbReference type="eggNOG" id="KOG0374">
    <property type="taxonomic scope" value="Eukaryota"/>
</dbReference>
<dbReference type="HOGENOM" id="CLU_004962_0_0_1"/>
<dbReference type="InParanoid" id="P20654"/>
<dbReference type="OMA" id="EEHEIRY"/>
<dbReference type="OrthoDB" id="1930084at2759"/>
<dbReference type="Proteomes" id="UP000000560">
    <property type="component" value="Chromosome VIII"/>
</dbReference>
<dbReference type="GO" id="GO:0030428">
    <property type="term" value="C:cell septum"/>
    <property type="evidence" value="ECO:0000314"/>
    <property type="project" value="AspGD"/>
</dbReference>
<dbReference type="GO" id="GO:0032174">
    <property type="term" value="C:cellular bud neck septin collar"/>
    <property type="evidence" value="ECO:0007669"/>
    <property type="project" value="EnsemblFungi"/>
</dbReference>
<dbReference type="GO" id="GO:0005737">
    <property type="term" value="C:cytoplasm"/>
    <property type="evidence" value="ECO:0000318"/>
    <property type="project" value="GO_Central"/>
</dbReference>
<dbReference type="GO" id="GO:0000131">
    <property type="term" value="C:incipient cellular bud site"/>
    <property type="evidence" value="ECO:0007669"/>
    <property type="project" value="EnsemblFungi"/>
</dbReference>
<dbReference type="GO" id="GO:0000776">
    <property type="term" value="C:kinetochore"/>
    <property type="evidence" value="ECO:0007669"/>
    <property type="project" value="EnsemblFungi"/>
</dbReference>
<dbReference type="GO" id="GO:0001400">
    <property type="term" value="C:mating projection base"/>
    <property type="evidence" value="ECO:0007669"/>
    <property type="project" value="EnsemblFungi"/>
</dbReference>
<dbReference type="GO" id="GO:0005847">
    <property type="term" value="C:mRNA cleavage and polyadenylation specificity factor complex"/>
    <property type="evidence" value="ECO:0007669"/>
    <property type="project" value="EnsemblFungi"/>
</dbReference>
<dbReference type="GO" id="GO:0005730">
    <property type="term" value="C:nucleolus"/>
    <property type="evidence" value="ECO:0000314"/>
    <property type="project" value="AspGD"/>
</dbReference>
<dbReference type="GO" id="GO:0005634">
    <property type="term" value="C:nucleus"/>
    <property type="evidence" value="ECO:0000318"/>
    <property type="project" value="GO_Central"/>
</dbReference>
<dbReference type="GO" id="GO:0000164">
    <property type="term" value="C:protein phosphatase type 1 complex"/>
    <property type="evidence" value="ECO:0007669"/>
    <property type="project" value="EnsemblFungi"/>
</dbReference>
<dbReference type="GO" id="GO:0005816">
    <property type="term" value="C:spindle pole body"/>
    <property type="evidence" value="ECO:0000314"/>
    <property type="project" value="AspGD"/>
</dbReference>
<dbReference type="GO" id="GO:0046872">
    <property type="term" value="F:metal ion binding"/>
    <property type="evidence" value="ECO:0007669"/>
    <property type="project" value="UniProtKB-KW"/>
</dbReference>
<dbReference type="GO" id="GO:0004722">
    <property type="term" value="F:protein serine/threonine phosphatase activity"/>
    <property type="evidence" value="ECO:0000318"/>
    <property type="project" value="GO_Central"/>
</dbReference>
<dbReference type="GO" id="GO:0051211">
    <property type="term" value="P:anisotropic cell growth"/>
    <property type="evidence" value="ECO:0000315"/>
    <property type="project" value="AspGD"/>
</dbReference>
<dbReference type="GO" id="GO:0030437">
    <property type="term" value="P:ascospore formation"/>
    <property type="evidence" value="ECO:0007669"/>
    <property type="project" value="EnsemblFungi"/>
</dbReference>
<dbReference type="GO" id="GO:0006031">
    <property type="term" value="P:chitin biosynthetic process"/>
    <property type="evidence" value="ECO:0007669"/>
    <property type="project" value="EnsemblFungi"/>
</dbReference>
<dbReference type="GO" id="GO:0007059">
    <property type="term" value="P:chromosome segregation"/>
    <property type="evidence" value="ECO:0000315"/>
    <property type="project" value="AspGD"/>
</dbReference>
<dbReference type="GO" id="GO:0000077">
    <property type="term" value="P:DNA damage checkpoint signaling"/>
    <property type="evidence" value="ECO:0007669"/>
    <property type="project" value="EnsemblFungi"/>
</dbReference>
<dbReference type="GO" id="GO:0000076">
    <property type="term" value="P:DNA replication checkpoint signaling"/>
    <property type="evidence" value="ECO:0007669"/>
    <property type="project" value="EnsemblFungi"/>
</dbReference>
<dbReference type="GO" id="GO:0030010">
    <property type="term" value="P:establishment of cell polarity"/>
    <property type="evidence" value="ECO:0000315"/>
    <property type="project" value="AspGD"/>
</dbReference>
<dbReference type="GO" id="GO:0006873">
    <property type="term" value="P:intracellular monoatomic ion homeostasis"/>
    <property type="evidence" value="ECO:0007669"/>
    <property type="project" value="EnsemblFungi"/>
</dbReference>
<dbReference type="GO" id="GO:0007094">
    <property type="term" value="P:mitotic spindle assembly checkpoint signaling"/>
    <property type="evidence" value="ECO:0007669"/>
    <property type="project" value="EnsemblFungi"/>
</dbReference>
<dbReference type="GO" id="GO:0000022">
    <property type="term" value="P:mitotic spindle elongation"/>
    <property type="evidence" value="ECO:0000315"/>
    <property type="project" value="AspGD"/>
</dbReference>
<dbReference type="GO" id="GO:2000370">
    <property type="term" value="P:positive regulation of clathrin-dependent endocytosis"/>
    <property type="evidence" value="ECO:0007669"/>
    <property type="project" value="EnsemblFungi"/>
</dbReference>
<dbReference type="GO" id="GO:0031536">
    <property type="term" value="P:positive regulation of exit from mitosis"/>
    <property type="evidence" value="ECO:0007669"/>
    <property type="project" value="EnsemblFungi"/>
</dbReference>
<dbReference type="GO" id="GO:1903501">
    <property type="term" value="P:positive regulation of mitotic actomyosin contractile ring assembly"/>
    <property type="evidence" value="ECO:0007669"/>
    <property type="project" value="EnsemblFungi"/>
</dbReference>
<dbReference type="GO" id="GO:0034501">
    <property type="term" value="P:protein localization to kinetochore"/>
    <property type="evidence" value="ECO:0007669"/>
    <property type="project" value="EnsemblFungi"/>
</dbReference>
<dbReference type="GO" id="GO:0007116">
    <property type="term" value="P:regulation of cell budding"/>
    <property type="evidence" value="ECO:0007669"/>
    <property type="project" value="EnsemblFungi"/>
</dbReference>
<dbReference type="GO" id="GO:0008360">
    <property type="term" value="P:regulation of cell shape"/>
    <property type="evidence" value="ECO:0007669"/>
    <property type="project" value="EnsemblFungi"/>
</dbReference>
<dbReference type="GO" id="GO:0070873">
    <property type="term" value="P:regulation of glycogen metabolic process"/>
    <property type="evidence" value="ECO:0007669"/>
    <property type="project" value="EnsemblFungi"/>
</dbReference>
<dbReference type="GO" id="GO:0007346">
    <property type="term" value="P:regulation of mitotic cell cycle"/>
    <property type="evidence" value="ECO:0000318"/>
    <property type="project" value="GO_Central"/>
</dbReference>
<dbReference type="GO" id="GO:1901901">
    <property type="term" value="P:regulation of protein localization to cell division site involved in cytokinesis"/>
    <property type="evidence" value="ECO:0007669"/>
    <property type="project" value="EnsemblFungi"/>
</dbReference>
<dbReference type="GO" id="GO:0031297">
    <property type="term" value="P:replication fork processing"/>
    <property type="evidence" value="ECO:0007669"/>
    <property type="project" value="EnsemblFungi"/>
</dbReference>
<dbReference type="GO" id="GO:0009408">
    <property type="term" value="P:response to heat"/>
    <property type="evidence" value="ECO:0007669"/>
    <property type="project" value="EnsemblFungi"/>
</dbReference>
<dbReference type="GO" id="GO:0006986">
    <property type="term" value="P:response to unfolded protein"/>
    <property type="evidence" value="ECO:0007669"/>
    <property type="project" value="EnsemblFungi"/>
</dbReference>
<dbReference type="GO" id="GO:0000723">
    <property type="term" value="P:telomere maintenance"/>
    <property type="evidence" value="ECO:0007669"/>
    <property type="project" value="EnsemblFungi"/>
</dbReference>
<dbReference type="CDD" id="cd07414">
    <property type="entry name" value="MPP_PP1_PPKL"/>
    <property type="match status" value="1"/>
</dbReference>
<dbReference type="FunFam" id="3.60.21.10:FF:000007">
    <property type="entry name" value="Serine/threonine-protein phosphatase"/>
    <property type="match status" value="1"/>
</dbReference>
<dbReference type="Gene3D" id="3.60.21.10">
    <property type="match status" value="1"/>
</dbReference>
<dbReference type="InterPro" id="IPR004843">
    <property type="entry name" value="Calcineurin-like_PHP_ApaH"/>
</dbReference>
<dbReference type="InterPro" id="IPR029052">
    <property type="entry name" value="Metallo-depent_PP-like"/>
</dbReference>
<dbReference type="InterPro" id="IPR050341">
    <property type="entry name" value="PP1_catalytic_subunit"/>
</dbReference>
<dbReference type="InterPro" id="IPR006186">
    <property type="entry name" value="Ser/Thr-sp_prot-phosphatase"/>
</dbReference>
<dbReference type="InterPro" id="IPR031675">
    <property type="entry name" value="STPPase_N"/>
</dbReference>
<dbReference type="PANTHER" id="PTHR11668">
    <property type="entry name" value="SERINE/THREONINE PROTEIN PHOSPHATASE"/>
    <property type="match status" value="1"/>
</dbReference>
<dbReference type="PANTHER" id="PTHR11668:SF300">
    <property type="entry name" value="SERINE_THREONINE-PROTEIN PHOSPHATASE"/>
    <property type="match status" value="1"/>
</dbReference>
<dbReference type="Pfam" id="PF00149">
    <property type="entry name" value="Metallophos"/>
    <property type="match status" value="1"/>
</dbReference>
<dbReference type="Pfam" id="PF16891">
    <property type="entry name" value="STPPase_N"/>
    <property type="match status" value="1"/>
</dbReference>
<dbReference type="PRINTS" id="PR00114">
    <property type="entry name" value="STPHPHTASE"/>
</dbReference>
<dbReference type="SMART" id="SM00156">
    <property type="entry name" value="PP2Ac"/>
    <property type="match status" value="1"/>
</dbReference>
<dbReference type="SUPFAM" id="SSF56300">
    <property type="entry name" value="Metallo-dependent phosphatases"/>
    <property type="match status" value="1"/>
</dbReference>
<dbReference type="PROSITE" id="PS00125">
    <property type="entry name" value="SER_THR_PHOSPHATASE"/>
    <property type="match status" value="1"/>
</dbReference>